<keyword id="KW-0963">Cytoplasm</keyword>
<keyword id="KW-0539">Nucleus</keyword>
<keyword id="KW-0653">Protein transport</keyword>
<keyword id="KW-1185">Reference proteome</keyword>
<keyword id="KW-0813">Transport</keyword>
<accession>Q5APB6</accession>
<accession>A0A1D8PEQ2</accession>
<gene>
    <name type="primary">STS1</name>
    <name type="ordered locus">CAALFM_C109840CA</name>
    <name type="ORF">CaO19.12312</name>
    <name type="ORF">CaO19.4849</name>
</gene>
<proteinExistence type="inferred from homology"/>
<feature type="chain" id="PRO_0000409401" description="Tethering factor for nuclear proteasome STS1">
    <location>
        <begin position="1"/>
        <end position="327"/>
    </location>
</feature>
<feature type="region of interest" description="Disordered" evidence="2">
    <location>
        <begin position="1"/>
        <end position="63"/>
    </location>
</feature>
<feature type="compositionally biased region" description="Polar residues" evidence="2">
    <location>
        <begin position="1"/>
        <end position="28"/>
    </location>
</feature>
<feature type="compositionally biased region" description="Low complexity" evidence="2">
    <location>
        <begin position="37"/>
        <end position="47"/>
    </location>
</feature>
<evidence type="ECO:0000250" key="1"/>
<evidence type="ECO:0000256" key="2">
    <source>
        <dbReference type="SAM" id="MobiDB-lite"/>
    </source>
</evidence>
<evidence type="ECO:0000305" key="3"/>
<organism>
    <name type="scientific">Candida albicans (strain SC5314 / ATCC MYA-2876)</name>
    <name type="common">Yeast</name>
    <dbReference type="NCBI Taxonomy" id="237561"/>
    <lineage>
        <taxon>Eukaryota</taxon>
        <taxon>Fungi</taxon>
        <taxon>Dikarya</taxon>
        <taxon>Ascomycota</taxon>
        <taxon>Saccharomycotina</taxon>
        <taxon>Pichiomycetes</taxon>
        <taxon>Debaryomycetaceae</taxon>
        <taxon>Candida/Lodderomyces clade</taxon>
        <taxon>Candida</taxon>
    </lineage>
</organism>
<sequence length="327" mass="37321">MMSTNFQWPGTNKNDNTEVSVETPSSTDPHVPRYPFTAMSHATASTTMKKRKRDDFDGDKSTTITMNTTTTRKYIQSSLGSSKFKKAKTPKISGQPLPLPRLIESLDKSNLQKLVQDLITVHPELQSTLIKISPRPSIQDSIQLLQDKFDMIISHLPYKCDVESDYSYLRIKPHLQEFLSSVSDFILNYLPPLETNMTHSLQFLHETTKLVYNLPNFTNQEFQYTKSSALEQIANCWLIVLSQDEEKEGNTDVVKVIQELELLEKLHEHNEISFNKFEKVVDYCKDKLEQHELIMNNNEAGSGVTSSISDLITVDYSKYSIANTTSI</sequence>
<protein>
    <recommendedName>
        <fullName>Tethering factor for nuclear proteasome STS1</fullName>
    </recommendedName>
</protein>
<name>STS1_CANAL</name>
<reference key="1">
    <citation type="journal article" date="2004" name="Proc. Natl. Acad. Sci. U.S.A.">
        <title>The diploid genome sequence of Candida albicans.</title>
        <authorList>
            <person name="Jones T."/>
            <person name="Federspiel N.A."/>
            <person name="Chibana H."/>
            <person name="Dungan J."/>
            <person name="Kalman S."/>
            <person name="Magee B.B."/>
            <person name="Newport G."/>
            <person name="Thorstenson Y.R."/>
            <person name="Agabian N."/>
            <person name="Magee P.T."/>
            <person name="Davis R.W."/>
            <person name="Scherer S."/>
        </authorList>
    </citation>
    <scope>NUCLEOTIDE SEQUENCE [LARGE SCALE GENOMIC DNA]</scope>
    <source>
        <strain>SC5314 / ATCC MYA-2876</strain>
    </source>
</reference>
<reference key="2">
    <citation type="journal article" date="2007" name="Genome Biol.">
        <title>Assembly of the Candida albicans genome into sixteen supercontigs aligned on the eight chromosomes.</title>
        <authorList>
            <person name="van het Hoog M."/>
            <person name="Rast T.J."/>
            <person name="Martchenko M."/>
            <person name="Grindle S."/>
            <person name="Dignard D."/>
            <person name="Hogues H."/>
            <person name="Cuomo C."/>
            <person name="Berriman M."/>
            <person name="Scherer S."/>
            <person name="Magee B.B."/>
            <person name="Whiteway M."/>
            <person name="Chibana H."/>
            <person name="Nantel A."/>
            <person name="Magee P.T."/>
        </authorList>
    </citation>
    <scope>GENOME REANNOTATION</scope>
    <source>
        <strain>SC5314 / ATCC MYA-2876</strain>
    </source>
</reference>
<reference key="3">
    <citation type="journal article" date="2013" name="Genome Biol.">
        <title>Assembly of a phased diploid Candida albicans genome facilitates allele-specific measurements and provides a simple model for repeat and indel structure.</title>
        <authorList>
            <person name="Muzzey D."/>
            <person name="Schwartz K."/>
            <person name="Weissman J.S."/>
            <person name="Sherlock G."/>
        </authorList>
    </citation>
    <scope>NUCLEOTIDE SEQUENCE [LARGE SCALE GENOMIC DNA]</scope>
    <scope>GENOME REANNOTATION</scope>
    <source>
        <strain>SC5314 / ATCC MYA-2876</strain>
    </source>
</reference>
<comment type="function">
    <text evidence="1">Involved in ubiquitin-mediated protein degradation. Regulatory factor in the ubiquitin/proteasome pathway that controls the turnover of proteasome substrates. Targets proteasomes to the nucleus and facilitates the degradation of nuclear proteins (By similarity).</text>
</comment>
<comment type="subunit">
    <text evidence="1">Binds the proteasome.</text>
</comment>
<comment type="subcellular location">
    <subcellularLocation>
        <location evidence="1">Cytoplasm</location>
    </subcellularLocation>
    <subcellularLocation>
        <location evidence="1">Nucleus</location>
    </subcellularLocation>
</comment>
<comment type="similarity">
    <text evidence="3">Belongs to the cut8/STS1 family.</text>
</comment>
<dbReference type="EMBL" id="CP017623">
    <property type="protein sequence ID" value="AOW26616.1"/>
    <property type="molecule type" value="Genomic_DNA"/>
</dbReference>
<dbReference type="RefSeq" id="XP_723535.1">
    <property type="nucleotide sequence ID" value="XM_718442.2"/>
</dbReference>
<dbReference type="SMR" id="Q5APB6"/>
<dbReference type="FunCoup" id="Q5APB6">
    <property type="interactions" value="15"/>
</dbReference>
<dbReference type="STRING" id="237561.Q5APB6"/>
<dbReference type="EnsemblFungi" id="C1_09840C_A-T">
    <property type="protein sequence ID" value="C1_09840C_A-T-p1"/>
    <property type="gene ID" value="C1_09840C_A"/>
</dbReference>
<dbReference type="GeneID" id="3634848"/>
<dbReference type="KEGG" id="cal:CAALFM_C109840CA"/>
<dbReference type="CGD" id="CAL0000185317">
    <property type="gene designation" value="orf19.12312"/>
</dbReference>
<dbReference type="VEuPathDB" id="FungiDB:C1_09840C_A"/>
<dbReference type="eggNOG" id="ENOG502RNK4">
    <property type="taxonomic scope" value="Eukaryota"/>
</dbReference>
<dbReference type="HOGENOM" id="CLU_054606_2_0_1"/>
<dbReference type="InParanoid" id="Q5APB6"/>
<dbReference type="OMA" id="DYTPHFL"/>
<dbReference type="OrthoDB" id="10061064at2759"/>
<dbReference type="PRO" id="PR:Q5APB6"/>
<dbReference type="Proteomes" id="UP000000559">
    <property type="component" value="Chromosome 1"/>
</dbReference>
<dbReference type="GO" id="GO:0005737">
    <property type="term" value="C:cytoplasm"/>
    <property type="evidence" value="ECO:0007669"/>
    <property type="project" value="UniProtKB-SubCell"/>
</dbReference>
<dbReference type="GO" id="GO:0005634">
    <property type="term" value="C:nucleus"/>
    <property type="evidence" value="ECO:0007669"/>
    <property type="project" value="UniProtKB-SubCell"/>
</dbReference>
<dbReference type="GO" id="GO:0070628">
    <property type="term" value="F:proteasome binding"/>
    <property type="evidence" value="ECO:0000318"/>
    <property type="project" value="GO_Central"/>
</dbReference>
<dbReference type="GO" id="GO:0071630">
    <property type="term" value="P:nuclear protein quality control by the ubiquitin-proteasome system"/>
    <property type="evidence" value="ECO:0000318"/>
    <property type="project" value="GO_Central"/>
</dbReference>
<dbReference type="GO" id="GO:0031144">
    <property type="term" value="P:proteasome localization"/>
    <property type="evidence" value="ECO:0000318"/>
    <property type="project" value="GO_Central"/>
</dbReference>
<dbReference type="GO" id="GO:0015031">
    <property type="term" value="P:protein transport"/>
    <property type="evidence" value="ECO:0007669"/>
    <property type="project" value="UniProtKB-KW"/>
</dbReference>
<dbReference type="FunFam" id="1.20.58.1590:FF:000005">
    <property type="entry name" value="Tethering factor for nuclear proteasome STS1"/>
    <property type="match status" value="1"/>
</dbReference>
<dbReference type="Gene3D" id="1.20.58.1590">
    <property type="entry name" value="Tethering factor for nuclear proteasome Cut8/Sts1"/>
    <property type="match status" value="1"/>
</dbReference>
<dbReference type="InterPro" id="IPR013868">
    <property type="entry name" value="Cut8/Sts1_fam"/>
</dbReference>
<dbReference type="InterPro" id="IPR038422">
    <property type="entry name" value="Cut8/Sts1_sf"/>
</dbReference>
<dbReference type="PANTHER" id="PTHR28032">
    <property type="entry name" value="FI02826P"/>
    <property type="match status" value="1"/>
</dbReference>
<dbReference type="PANTHER" id="PTHR28032:SF1">
    <property type="entry name" value="FI02826P"/>
    <property type="match status" value="1"/>
</dbReference>
<dbReference type="Pfam" id="PF08559">
    <property type="entry name" value="Cut8"/>
    <property type="match status" value="1"/>
</dbReference>